<organism>
    <name type="scientific">Mycobacterium bovis (strain ATCC BAA-935 / AF2122/97)</name>
    <dbReference type="NCBI Taxonomy" id="233413"/>
    <lineage>
        <taxon>Bacteria</taxon>
        <taxon>Bacillati</taxon>
        <taxon>Actinomycetota</taxon>
        <taxon>Actinomycetes</taxon>
        <taxon>Mycobacteriales</taxon>
        <taxon>Mycobacteriaceae</taxon>
        <taxon>Mycobacterium</taxon>
        <taxon>Mycobacterium tuberculosis complex</taxon>
    </lineage>
</organism>
<comment type="similarity">
    <text evidence="1">Belongs to the Rv1128c/1148c/1588c/1702c/1945/3466 family.</text>
</comment>
<comment type="sequence caution" evidence="1">
    <conflict type="erroneous initiation">
        <sequence resource="EMBL-CDS" id="SIT99779"/>
    </conflict>
    <text>Extended N-terminus.</text>
</comment>
<proteinExistence type="inferred from homology"/>
<gene>
    <name type="ordered locus">BQ2027_MB1179</name>
</gene>
<sequence>MRSDTREEISAALDAYHASLSRVLDLKCDALTTPELLACLQRLEVERRRQGAAEHALINQLAGQACEEELGGTLRTALANRLHITPGEASRRIAEAEDLGERRALTGEPLPAQLTATAAAQREGKIGREHIKEIQAFFKELSAAVDLGIREAAEAQLAELATSRRPDHLHGLATQLMDWLHPDGNFSDQERARKRGITMGKQEFDGMSRISGLLTPELRATIEAVLAKLAAPGACNPDDQTPLVDDTPDADAVRRDTRSQAQRNHDAFLAALRGLLASGELGQHKGLPVTIVVSTTLKELEAATGKGVTGGGSRVPMSDLIRMASHANHYLALFDGAKPLALYHTKRLASPAQRIMLYAKDRGCSRPGCDAPAYHSEVHHVTPWTTTHRTDINDLTLACGPDNRLVEKGWKTRKNAHGDTEWLPPPHLDHGQPRINRYHHPAKILCEQDDDEPH</sequence>
<protein>
    <recommendedName>
        <fullName>Uncharacterized protein Mb1179c</fullName>
    </recommendedName>
</protein>
<keyword id="KW-1185">Reference proteome</keyword>
<feature type="chain" id="PRO_0000103771" description="Uncharacterized protein Mb1179c">
    <location>
        <begin position="1"/>
        <end position="454"/>
    </location>
</feature>
<feature type="domain" description="HNH">
    <location>
        <begin position="364"/>
        <end position="405"/>
    </location>
</feature>
<name>Y1179_MYCBO</name>
<accession>P0A5E0</accession>
<accession>A0A1R3XXI4</accession>
<accession>O06548</accession>
<accession>X2BHH0</accession>
<reference key="1">
    <citation type="journal article" date="2003" name="Proc. Natl. Acad. Sci. U.S.A.">
        <title>The complete genome sequence of Mycobacterium bovis.</title>
        <authorList>
            <person name="Garnier T."/>
            <person name="Eiglmeier K."/>
            <person name="Camus J.-C."/>
            <person name="Medina N."/>
            <person name="Mansoor H."/>
            <person name="Pryor M."/>
            <person name="Duthoy S."/>
            <person name="Grondin S."/>
            <person name="Lacroix C."/>
            <person name="Monsempe C."/>
            <person name="Simon S."/>
            <person name="Harris B."/>
            <person name="Atkin R."/>
            <person name="Doggett J."/>
            <person name="Mayes R."/>
            <person name="Keating L."/>
            <person name="Wheeler P.R."/>
            <person name="Parkhill J."/>
            <person name="Barrell B.G."/>
            <person name="Cole S.T."/>
            <person name="Gordon S.V."/>
            <person name="Hewinson R.G."/>
        </authorList>
    </citation>
    <scope>NUCLEOTIDE SEQUENCE [LARGE SCALE GENOMIC DNA]</scope>
    <source>
        <strain>ATCC BAA-935 / AF2122/97</strain>
    </source>
</reference>
<reference key="2">
    <citation type="journal article" date="2017" name="Genome Announc.">
        <title>Updated reference genome sequence and annotation of Mycobacterium bovis AF2122/97.</title>
        <authorList>
            <person name="Malone K.M."/>
            <person name="Farrell D."/>
            <person name="Stuber T.P."/>
            <person name="Schubert O.T."/>
            <person name="Aebersold R."/>
            <person name="Robbe-Austerman S."/>
            <person name="Gordon S.V."/>
        </authorList>
    </citation>
    <scope>NUCLEOTIDE SEQUENCE [LARGE SCALE GENOMIC DNA]</scope>
    <scope>GENOME REANNOTATION</scope>
    <source>
        <strain>ATCC BAA-935 / AF2122/97</strain>
    </source>
</reference>
<evidence type="ECO:0000305" key="1"/>
<dbReference type="EMBL" id="LT708304">
    <property type="protein sequence ID" value="SIT99779.1"/>
    <property type="status" value="ALT_INIT"/>
    <property type="molecule type" value="Genomic_DNA"/>
</dbReference>
<dbReference type="RefSeq" id="NP_854835.1">
    <property type="nucleotide sequence ID" value="NC_002945.3"/>
</dbReference>
<dbReference type="RefSeq" id="WP_003898743.1">
    <property type="nucleotide sequence ID" value="NC_002945.4"/>
</dbReference>
<dbReference type="SMR" id="P0A5E0"/>
<dbReference type="KEGG" id="mbo:BQ2027_MB1179C"/>
<dbReference type="PATRIC" id="fig|233413.5.peg.1294"/>
<dbReference type="Proteomes" id="UP000001419">
    <property type="component" value="Chromosome"/>
</dbReference>
<dbReference type="GO" id="GO:0004519">
    <property type="term" value="F:endonuclease activity"/>
    <property type="evidence" value="ECO:0007669"/>
    <property type="project" value="InterPro"/>
</dbReference>
<dbReference type="GO" id="GO:0003676">
    <property type="term" value="F:nucleic acid binding"/>
    <property type="evidence" value="ECO:0007669"/>
    <property type="project" value="InterPro"/>
</dbReference>
<dbReference type="GO" id="GO:0008270">
    <property type="term" value="F:zinc ion binding"/>
    <property type="evidence" value="ECO:0007669"/>
    <property type="project" value="InterPro"/>
</dbReference>
<dbReference type="CDD" id="cd00085">
    <property type="entry name" value="HNHc"/>
    <property type="match status" value="1"/>
</dbReference>
<dbReference type="InterPro" id="IPR003870">
    <property type="entry name" value="DUF222"/>
</dbReference>
<dbReference type="InterPro" id="IPR002711">
    <property type="entry name" value="HNH"/>
</dbReference>
<dbReference type="InterPro" id="IPR003615">
    <property type="entry name" value="HNH_nuc"/>
</dbReference>
<dbReference type="Pfam" id="PF02720">
    <property type="entry name" value="DUF222"/>
    <property type="match status" value="1"/>
</dbReference>
<dbReference type="Pfam" id="PF01844">
    <property type="entry name" value="HNH"/>
    <property type="match status" value="1"/>
</dbReference>
<dbReference type="SMART" id="SM00507">
    <property type="entry name" value="HNHc"/>
    <property type="match status" value="1"/>
</dbReference>